<name>NDB2T_OPICA</name>
<proteinExistence type="inferred from homology"/>
<feature type="chain" id="PRO_5000092331" description="Opistoporin-4" evidence="4">
    <location>
        <begin position="1"/>
        <end position="44"/>
    </location>
</feature>
<feature type="propeptide" id="PRO_0000366113" evidence="1">
    <location>
        <begin position="45"/>
        <end position="61"/>
    </location>
</feature>
<keyword id="KW-0044">Antibiotic</keyword>
<keyword id="KW-0929">Antimicrobial</keyword>
<keyword id="KW-0204">Cytolysis</keyword>
<keyword id="KW-0295">Fungicide</keyword>
<keyword id="KW-0354">Hemolysis</keyword>
<keyword id="KW-0406">Ion transport</keyword>
<keyword id="KW-0472">Membrane</keyword>
<keyword id="KW-0964">Secreted</keyword>
<keyword id="KW-1052">Target cell membrane</keyword>
<keyword id="KW-1053">Target membrane</keyword>
<keyword id="KW-0812">Transmembrane</keyword>
<keyword id="KW-0813">Transport</keyword>
<protein>
    <recommendedName>
        <fullName evidence="2">Opistoporin-4</fullName>
    </recommendedName>
</protein>
<dbReference type="EMBL" id="AY427949">
    <property type="protein sequence ID" value="AAQ94361.1"/>
    <property type="molecule type" value="mRNA"/>
</dbReference>
<dbReference type="SMR" id="Q5VJS9"/>
<dbReference type="GO" id="GO:0005576">
    <property type="term" value="C:extracellular region"/>
    <property type="evidence" value="ECO:0007669"/>
    <property type="project" value="UniProtKB-SubCell"/>
</dbReference>
<dbReference type="GO" id="GO:0016020">
    <property type="term" value="C:membrane"/>
    <property type="evidence" value="ECO:0007669"/>
    <property type="project" value="UniProtKB-KW"/>
</dbReference>
<dbReference type="GO" id="GO:0044218">
    <property type="term" value="C:other organism cell membrane"/>
    <property type="evidence" value="ECO:0007669"/>
    <property type="project" value="UniProtKB-KW"/>
</dbReference>
<dbReference type="GO" id="GO:0042742">
    <property type="term" value="P:defense response to bacterium"/>
    <property type="evidence" value="ECO:0007669"/>
    <property type="project" value="UniProtKB-KW"/>
</dbReference>
<dbReference type="GO" id="GO:0050832">
    <property type="term" value="P:defense response to fungus"/>
    <property type="evidence" value="ECO:0007669"/>
    <property type="project" value="UniProtKB-KW"/>
</dbReference>
<dbReference type="GO" id="GO:0044179">
    <property type="term" value="P:hemolysis in another organism"/>
    <property type="evidence" value="ECO:0007669"/>
    <property type="project" value="InterPro"/>
</dbReference>
<dbReference type="GO" id="GO:0006811">
    <property type="term" value="P:monoatomic ion transport"/>
    <property type="evidence" value="ECO:0007669"/>
    <property type="project" value="UniProtKB-KW"/>
</dbReference>
<dbReference type="InterPro" id="IPR012526">
    <property type="entry name" value="Antimicrobial_7"/>
</dbReference>
<dbReference type="Pfam" id="PF08102">
    <property type="entry name" value="Antimicrobial_7"/>
    <property type="match status" value="1"/>
</dbReference>
<sequence length="61" mass="6886">GKVWDWIKKTAKDVLNSDVAKQLKNKALNAAKNFVAEKIGATPSEAGQMPFDEFMDILHYY</sequence>
<reference key="1">
    <citation type="submission" date="2003-10" db="EMBL/GenBank/DDBJ databases">
        <title>Precursor organization and gene structure of scorpion venom antimicrobial peptides.</title>
        <authorList>
            <person name="Zhu S."/>
            <person name="Tytgat J."/>
        </authorList>
    </citation>
    <scope>NUCLEOTIDE SEQUENCE [MRNA]</scope>
    <source>
        <tissue>Venom gland</tissue>
    </source>
</reference>
<evidence type="ECO:0000250" key="1">
    <source>
        <dbReference type="UniProtKB" id="P83313"/>
    </source>
</evidence>
<evidence type="ECO:0000303" key="2">
    <source ref="1"/>
</evidence>
<evidence type="ECO:0000305" key="3"/>
<evidence type="ECO:0000305" key="4">
    <source ref="1"/>
</evidence>
<comment type="function">
    <text evidence="1">At high concentrations, acts as a pore former in cellular membranes and causes the leakage of the cells. At submicromolar concentrations, degranulates granulocytes and has a weak hemolytic activity against human erythrocytes. Also strongly inhibits the production of superoxide anions. Has a strong antibacterial activity against Gram-negative bacteria but is less active against Gram-positive bacteria. Also has antifungal activity.</text>
</comment>
<comment type="subcellular location">
    <subcellularLocation>
        <location evidence="1">Secreted</location>
    </subcellularLocation>
    <subcellularLocation>
        <location evidence="1">Target cell membrane</location>
    </subcellularLocation>
    <text evidence="1">Forms a helical membrane channel in the prey.</text>
</comment>
<comment type="tissue specificity">
    <text evidence="4">Expressed by the venom gland.</text>
</comment>
<comment type="similarity">
    <text evidence="3">Belongs to the non-disulfide-bridged peptide (NDBP) superfamily. Long chain multifunctional peptide (group 2) family.</text>
</comment>
<accession>Q5VJS9</accession>
<organism>
    <name type="scientific">Opistophthalmus carinatus</name>
    <name type="common">African yellow leg scorpion</name>
    <dbReference type="NCBI Taxonomy" id="190115"/>
    <lineage>
        <taxon>Eukaryota</taxon>
        <taxon>Metazoa</taxon>
        <taxon>Ecdysozoa</taxon>
        <taxon>Arthropoda</taxon>
        <taxon>Chelicerata</taxon>
        <taxon>Arachnida</taxon>
        <taxon>Scorpiones</taxon>
        <taxon>Iurida</taxon>
        <taxon>Scorpionoidea</taxon>
        <taxon>Scorpionidae</taxon>
        <taxon>Opistophthalminae</taxon>
        <taxon>Opistophthalmus</taxon>
    </lineage>
</organism>